<accession>Q1JP73</accession>
<evidence type="ECO:0000250" key="1">
    <source>
        <dbReference type="UniProtKB" id="D1C7A6"/>
    </source>
</evidence>
<evidence type="ECO:0000250" key="2">
    <source>
        <dbReference type="UniProtKB" id="Q5T6V5"/>
    </source>
</evidence>
<evidence type="ECO:0000305" key="3"/>
<sequence>MDGLLTPRESAKFIAENSRDVFIDDGGVRRVAELLLAKATGPELRIEGWKAIHELNPRGTDEAAVNWVFVTDTLNFSFWSESDEYKCQVGFGGKTYSGYWSLCAAVNRALDEGIPITSASYYATVTLDEVRHILRSDTDVPMPLIEERHRILNETGKILLEKFGGSFLNCVQKSDKSAQKLLHLVVENFPSYRDVTQFEGKRISFYKRAQILVADTWSVLEGKGDGCFKDISSITMFADYRLPQVLVYLGALKYSNELLEKLLKGEMLFYGNRQEVEIRGCSVWCVELIRDCLLELIEKKGEKTTGEINSILLDYYLWDYARDHREDMKGIPFHHTRCIYY</sequence>
<feature type="chain" id="PRO_0000327922" description="Queuosine 5'-phosphate N-glycosylase/hydrolase">
    <location>
        <begin position="1"/>
        <end position="341"/>
    </location>
</feature>
<feature type="active site" description="Nucleophile or transition state stabilizer" evidence="1">
    <location>
        <position position="239"/>
    </location>
</feature>
<feature type="binding site" evidence="2">
    <location>
        <position position="53"/>
    </location>
    <ligand>
        <name>queuine</name>
        <dbReference type="ChEBI" id="CHEBI:17433"/>
    </ligand>
</feature>
<feature type="binding site" evidence="2">
    <location>
        <position position="237"/>
    </location>
    <ligand>
        <name>queuine</name>
        <dbReference type="ChEBI" id="CHEBI:17433"/>
    </ligand>
</feature>
<feature type="binding site" evidence="2">
    <location>
        <position position="239"/>
    </location>
    <ligand>
        <name>queuine</name>
        <dbReference type="ChEBI" id="CHEBI:17433"/>
    </ligand>
</feature>
<feature type="binding site" evidence="2">
    <location>
        <position position="314"/>
    </location>
    <ligand>
        <name>queuine</name>
        <dbReference type="ChEBI" id="CHEBI:17433"/>
    </ligand>
</feature>
<feature type="binding site" evidence="2">
    <location>
        <position position="315"/>
    </location>
    <ligand>
        <name>queuine</name>
        <dbReference type="ChEBI" id="CHEBI:17433"/>
    </ligand>
</feature>
<feature type="binding site" evidence="2">
    <location>
        <position position="319"/>
    </location>
    <ligand>
        <name>queuine</name>
        <dbReference type="ChEBI" id="CHEBI:17433"/>
    </ligand>
</feature>
<feature type="modified residue" description="N-acetylmethionine" evidence="2">
    <location>
        <position position="1"/>
    </location>
</feature>
<keyword id="KW-0007">Acetylation</keyword>
<keyword id="KW-0378">Hydrolase</keyword>
<keyword id="KW-1185">Reference proteome</keyword>
<organism>
    <name type="scientific">Bos taurus</name>
    <name type="common">Bovine</name>
    <dbReference type="NCBI Taxonomy" id="9913"/>
    <lineage>
        <taxon>Eukaryota</taxon>
        <taxon>Metazoa</taxon>
        <taxon>Chordata</taxon>
        <taxon>Craniata</taxon>
        <taxon>Vertebrata</taxon>
        <taxon>Euteleostomi</taxon>
        <taxon>Mammalia</taxon>
        <taxon>Eutheria</taxon>
        <taxon>Laurasiatheria</taxon>
        <taxon>Artiodactyla</taxon>
        <taxon>Ruminantia</taxon>
        <taxon>Pecora</taxon>
        <taxon>Bovidae</taxon>
        <taxon>Bovinae</taxon>
        <taxon>Bos</taxon>
    </lineage>
</organism>
<name>QNG1_BOVIN</name>
<comment type="function">
    <text evidence="2">Catalyzes the hydrolysis of queuosine 5'-phosphate, releasing the nucleobase queuine (q). Is required for salvage of queuine from exogenous queuosine (Q) that is imported and then converted to queuosine 5'-phosphate intracellularly.</text>
</comment>
<comment type="catalytic activity">
    <reaction evidence="2">
        <text>queuosine 5'-phosphate + H2O = queuine + D-ribose 5-phosphate</text>
        <dbReference type="Rhea" id="RHEA:75387"/>
        <dbReference type="ChEBI" id="CHEBI:15377"/>
        <dbReference type="ChEBI" id="CHEBI:17433"/>
        <dbReference type="ChEBI" id="CHEBI:78346"/>
        <dbReference type="ChEBI" id="CHEBI:194371"/>
    </reaction>
    <physiologicalReaction direction="left-to-right" evidence="2">
        <dbReference type="Rhea" id="RHEA:75388"/>
    </physiologicalReaction>
</comment>
<comment type="miscellaneous">
    <text evidence="2">Eukaryotes lack the canonical genes for de novo biosynthesis of queuosine (Q), present in most bacteria. Therefore, this molecule must be sourced from ingested food and/or the gut microbiota, and metabolized to its corresponding nucleobase, queuine (q), before incorporation into cytoplasmic and mitochondrial tRNAs. Incorporation of q into the anticodon of some tRNAs contributes to translational efficiency and accuracy.</text>
</comment>
<comment type="similarity">
    <text evidence="3">Belongs to the QNG1 protein family.</text>
</comment>
<dbReference type="EC" id="3.2.2.-" evidence="2"/>
<dbReference type="EMBL" id="BT025481">
    <property type="protein sequence ID" value="ABF57437.1"/>
    <property type="molecule type" value="mRNA"/>
</dbReference>
<dbReference type="RefSeq" id="NP_001070446.1">
    <property type="nucleotide sequence ID" value="NM_001076978.1"/>
</dbReference>
<dbReference type="SMR" id="Q1JP73"/>
<dbReference type="FunCoup" id="Q1JP73">
    <property type="interactions" value="2121"/>
</dbReference>
<dbReference type="STRING" id="9913.ENSBTAP00000008492"/>
<dbReference type="PaxDb" id="9913-ENSBTAP00000008492"/>
<dbReference type="GeneID" id="767897"/>
<dbReference type="KEGG" id="bta:767897"/>
<dbReference type="CTD" id="84267"/>
<dbReference type="eggNOG" id="KOG2524">
    <property type="taxonomic scope" value="Eukaryota"/>
</dbReference>
<dbReference type="InParanoid" id="Q1JP73"/>
<dbReference type="OrthoDB" id="416777at2759"/>
<dbReference type="Proteomes" id="UP000009136">
    <property type="component" value="Unplaced"/>
</dbReference>
<dbReference type="GO" id="GO:0016787">
    <property type="term" value="F:hydrolase activity"/>
    <property type="evidence" value="ECO:0007669"/>
    <property type="project" value="UniProtKB-KW"/>
</dbReference>
<dbReference type="GO" id="GO:0043174">
    <property type="term" value="P:nucleoside salvage"/>
    <property type="evidence" value="ECO:0000250"/>
    <property type="project" value="UniProtKB"/>
</dbReference>
<dbReference type="GO" id="GO:0101030">
    <property type="term" value="P:tRNA-guanine transglycosylation"/>
    <property type="evidence" value="ECO:0000318"/>
    <property type="project" value="GO_Central"/>
</dbReference>
<dbReference type="InterPro" id="IPR019438">
    <property type="entry name" value="Q_salvage"/>
</dbReference>
<dbReference type="PANTHER" id="PTHR21314:SF0">
    <property type="entry name" value="QUEUOSINE 5'-PHOSPHATE N-GLYCOSYLASE_HYDROLASE"/>
    <property type="match status" value="1"/>
</dbReference>
<dbReference type="PANTHER" id="PTHR21314">
    <property type="entry name" value="QUEUOSINE 5'-PHOSPHATE N-GLYCOSYLASE_HYDROLASE-RELATED"/>
    <property type="match status" value="1"/>
</dbReference>
<dbReference type="Pfam" id="PF10343">
    <property type="entry name" value="Q_salvage"/>
    <property type="match status" value="1"/>
</dbReference>
<proteinExistence type="evidence at transcript level"/>
<gene>
    <name evidence="2" type="primary">QNG1</name>
</gene>
<reference key="1">
    <citation type="journal article" date="2005" name="BMC Genomics">
        <title>Characterization of 954 bovine full-CDS cDNA sequences.</title>
        <authorList>
            <person name="Harhay G.P."/>
            <person name="Sonstegard T.S."/>
            <person name="Keele J.W."/>
            <person name="Heaton M.P."/>
            <person name="Clawson M.L."/>
            <person name="Snelling W.M."/>
            <person name="Wiedmann R.T."/>
            <person name="Van Tassell C.P."/>
            <person name="Smith T.P.L."/>
        </authorList>
    </citation>
    <scope>NUCLEOTIDE SEQUENCE [LARGE SCALE MRNA]</scope>
</reference>
<protein>
    <recommendedName>
        <fullName evidence="2">Queuosine 5'-phosphate N-glycosylase/hydrolase</fullName>
        <ecNumber evidence="2">3.2.2.-</ecNumber>
    </recommendedName>
    <alternativeName>
        <fullName evidence="2">Queuosine-nucleotide N-glycosylase/hydrolase</fullName>
    </alternativeName>
</protein>